<name>Y297_CUPMC</name>
<dbReference type="EMBL" id="CP000352">
    <property type="protein sequence ID" value="ABF07183.1"/>
    <property type="molecule type" value="Genomic_DNA"/>
</dbReference>
<dbReference type="RefSeq" id="WP_011515185.1">
    <property type="nucleotide sequence ID" value="NC_007973.1"/>
</dbReference>
<dbReference type="SMR" id="Q1LRP3"/>
<dbReference type="STRING" id="266264.Rmet_0297"/>
<dbReference type="KEGG" id="rme:Rmet_0297"/>
<dbReference type="eggNOG" id="COG1660">
    <property type="taxonomic scope" value="Bacteria"/>
</dbReference>
<dbReference type="HOGENOM" id="CLU_059558_1_1_4"/>
<dbReference type="Proteomes" id="UP000002429">
    <property type="component" value="Chromosome"/>
</dbReference>
<dbReference type="GO" id="GO:0005524">
    <property type="term" value="F:ATP binding"/>
    <property type="evidence" value="ECO:0007669"/>
    <property type="project" value="UniProtKB-UniRule"/>
</dbReference>
<dbReference type="GO" id="GO:0005525">
    <property type="term" value="F:GTP binding"/>
    <property type="evidence" value="ECO:0007669"/>
    <property type="project" value="UniProtKB-UniRule"/>
</dbReference>
<dbReference type="HAMAP" id="MF_00636">
    <property type="entry name" value="RapZ_like"/>
    <property type="match status" value="1"/>
</dbReference>
<dbReference type="InterPro" id="IPR027417">
    <property type="entry name" value="P-loop_NTPase"/>
</dbReference>
<dbReference type="InterPro" id="IPR005337">
    <property type="entry name" value="RapZ-like"/>
</dbReference>
<dbReference type="InterPro" id="IPR053930">
    <property type="entry name" value="RapZ-like_N"/>
</dbReference>
<dbReference type="InterPro" id="IPR053931">
    <property type="entry name" value="RapZ_C"/>
</dbReference>
<dbReference type="NCBIfam" id="NF003828">
    <property type="entry name" value="PRK05416.1"/>
    <property type="match status" value="1"/>
</dbReference>
<dbReference type="PANTHER" id="PTHR30448">
    <property type="entry name" value="RNASE ADAPTER PROTEIN RAPZ"/>
    <property type="match status" value="1"/>
</dbReference>
<dbReference type="PANTHER" id="PTHR30448:SF0">
    <property type="entry name" value="RNASE ADAPTER PROTEIN RAPZ"/>
    <property type="match status" value="1"/>
</dbReference>
<dbReference type="Pfam" id="PF22740">
    <property type="entry name" value="PapZ_C"/>
    <property type="match status" value="1"/>
</dbReference>
<dbReference type="Pfam" id="PF03668">
    <property type="entry name" value="RapZ-like_N"/>
    <property type="match status" value="1"/>
</dbReference>
<dbReference type="PIRSF" id="PIRSF005052">
    <property type="entry name" value="P-loopkin"/>
    <property type="match status" value="1"/>
</dbReference>
<dbReference type="SUPFAM" id="SSF52540">
    <property type="entry name" value="P-loop containing nucleoside triphosphate hydrolases"/>
    <property type="match status" value="1"/>
</dbReference>
<keyword id="KW-0067">ATP-binding</keyword>
<keyword id="KW-0342">GTP-binding</keyword>
<keyword id="KW-0547">Nucleotide-binding</keyword>
<keyword id="KW-1185">Reference proteome</keyword>
<accession>Q1LRP3</accession>
<feature type="chain" id="PRO_0000258988" description="Nucleotide-binding protein Rmet_0297">
    <location>
        <begin position="1"/>
        <end position="296"/>
    </location>
</feature>
<feature type="binding site" evidence="1">
    <location>
        <begin position="8"/>
        <end position="15"/>
    </location>
    <ligand>
        <name>ATP</name>
        <dbReference type="ChEBI" id="CHEBI:30616"/>
    </ligand>
</feature>
<feature type="binding site" evidence="1">
    <location>
        <begin position="57"/>
        <end position="60"/>
    </location>
    <ligand>
        <name>GTP</name>
        <dbReference type="ChEBI" id="CHEBI:37565"/>
    </ligand>
</feature>
<proteinExistence type="inferred from homology"/>
<sequence length="296" mass="32856">MRIILITGISGSGKSVALNVLEDAGYYCVDNLPAQFIPDLACYLADQGYSQLGVATDIRSRESLARLPDTVRELAANHQVQVLYLTASTDALVQRYSETRRRHPLSAQVDVGAAAGTPNDTSLIEAIEKERELLSPLAESAHRIDTSNVRTNTLRSWIKELIQDENENKNSQQLTLLFESFGFKHGVPSDADLVFDVRSLPNPYYDLALRPLTGRDAPVIDFLQSQPMVLAMAEDIRAYVEKWLPSFIADNRSYLTVTIGCTGGQHRSVFIAERLANYFRAHGNVLVRHRELAPAG</sequence>
<evidence type="ECO:0000255" key="1">
    <source>
        <dbReference type="HAMAP-Rule" id="MF_00636"/>
    </source>
</evidence>
<organism>
    <name type="scientific">Cupriavidus metallidurans (strain ATCC 43123 / DSM 2839 / NBRC 102507 / CH34)</name>
    <name type="common">Ralstonia metallidurans</name>
    <dbReference type="NCBI Taxonomy" id="266264"/>
    <lineage>
        <taxon>Bacteria</taxon>
        <taxon>Pseudomonadati</taxon>
        <taxon>Pseudomonadota</taxon>
        <taxon>Betaproteobacteria</taxon>
        <taxon>Burkholderiales</taxon>
        <taxon>Burkholderiaceae</taxon>
        <taxon>Cupriavidus</taxon>
    </lineage>
</organism>
<gene>
    <name type="ordered locus">Rmet_0297</name>
</gene>
<comment type="function">
    <text evidence="1">Displays ATPase and GTPase activities.</text>
</comment>
<comment type="similarity">
    <text evidence="1">Belongs to the RapZ-like family.</text>
</comment>
<protein>
    <recommendedName>
        <fullName evidence="1">Nucleotide-binding protein Rmet_0297</fullName>
    </recommendedName>
</protein>
<reference key="1">
    <citation type="journal article" date="2010" name="PLoS ONE">
        <title>The complete genome sequence of Cupriavidus metallidurans strain CH34, a master survivalist in harsh and anthropogenic environments.</title>
        <authorList>
            <person name="Janssen P.J."/>
            <person name="Van Houdt R."/>
            <person name="Moors H."/>
            <person name="Monsieurs P."/>
            <person name="Morin N."/>
            <person name="Michaux A."/>
            <person name="Benotmane M.A."/>
            <person name="Leys N."/>
            <person name="Vallaeys T."/>
            <person name="Lapidus A."/>
            <person name="Monchy S."/>
            <person name="Medigue C."/>
            <person name="Taghavi S."/>
            <person name="McCorkle S."/>
            <person name="Dunn J."/>
            <person name="van der Lelie D."/>
            <person name="Mergeay M."/>
        </authorList>
    </citation>
    <scope>NUCLEOTIDE SEQUENCE [LARGE SCALE GENOMIC DNA]</scope>
    <source>
        <strain>ATCC 43123 / DSM 2839 / NBRC 102507 / CH34</strain>
    </source>
</reference>